<gene>
    <name evidence="1" type="primary">nop10</name>
    <name type="ordered locus">Msp_1525</name>
</gene>
<sequence>MKFQMRKCKECGEYTLEESCPECNVKTGVIFPARYSPQDKYGKYRRILKRQQMEK</sequence>
<comment type="function">
    <text evidence="1">Involved in ribosome biogenesis; more specifically in 18S rRNA pseudouridylation and in cleavage of pre-rRNA.</text>
</comment>
<comment type="similarity">
    <text evidence="1">Belongs to the NOP10 family.</text>
</comment>
<keyword id="KW-1185">Reference proteome</keyword>
<keyword id="KW-0687">Ribonucleoprotein</keyword>
<keyword id="KW-0690">Ribosome biogenesis</keyword>
<keyword id="KW-0698">rRNA processing</keyword>
<organism>
    <name type="scientific">Methanosphaera stadtmanae (strain ATCC 43021 / DSM 3091 / JCM 11832 / MCB-3)</name>
    <dbReference type="NCBI Taxonomy" id="339860"/>
    <lineage>
        <taxon>Archaea</taxon>
        <taxon>Methanobacteriati</taxon>
        <taxon>Methanobacteriota</taxon>
        <taxon>Methanomada group</taxon>
        <taxon>Methanobacteria</taxon>
        <taxon>Methanobacteriales</taxon>
        <taxon>Methanobacteriaceae</taxon>
        <taxon>Methanosphaera</taxon>
    </lineage>
</organism>
<protein>
    <recommendedName>
        <fullName evidence="1">Ribosome biogenesis protein Nop10</fullName>
    </recommendedName>
</protein>
<dbReference type="EMBL" id="CP000102">
    <property type="protein sequence ID" value="ABC57892.1"/>
    <property type="molecule type" value="Genomic_DNA"/>
</dbReference>
<dbReference type="RefSeq" id="WP_011407091.1">
    <property type="nucleotide sequence ID" value="NC_007681.1"/>
</dbReference>
<dbReference type="SMR" id="Q2NE61"/>
<dbReference type="STRING" id="339860.Msp_1525"/>
<dbReference type="KEGG" id="mst:Msp_1525"/>
<dbReference type="eggNOG" id="arCOG00906">
    <property type="taxonomic scope" value="Archaea"/>
</dbReference>
<dbReference type="HOGENOM" id="CLU_196480_1_0_2"/>
<dbReference type="OrthoDB" id="7259at2157"/>
<dbReference type="Proteomes" id="UP000001931">
    <property type="component" value="Chromosome"/>
</dbReference>
<dbReference type="GO" id="GO:1990904">
    <property type="term" value="C:ribonucleoprotein complex"/>
    <property type="evidence" value="ECO:0007669"/>
    <property type="project" value="UniProtKB-KW"/>
</dbReference>
<dbReference type="GO" id="GO:0030515">
    <property type="term" value="F:snoRNA binding"/>
    <property type="evidence" value="ECO:0007669"/>
    <property type="project" value="InterPro"/>
</dbReference>
<dbReference type="GO" id="GO:0001522">
    <property type="term" value="P:pseudouridine synthesis"/>
    <property type="evidence" value="ECO:0007669"/>
    <property type="project" value="InterPro"/>
</dbReference>
<dbReference type="GO" id="GO:0006364">
    <property type="term" value="P:rRNA processing"/>
    <property type="evidence" value="ECO:0007669"/>
    <property type="project" value="UniProtKB-UniRule"/>
</dbReference>
<dbReference type="Gene3D" id="2.20.28.40">
    <property type="entry name" value="H/ACA ribonucleoprotein complex, subunit Nop10"/>
    <property type="match status" value="1"/>
</dbReference>
<dbReference type="HAMAP" id="MF_00803">
    <property type="entry name" value="Nop10"/>
    <property type="match status" value="1"/>
</dbReference>
<dbReference type="InterPro" id="IPR007264">
    <property type="entry name" value="H/ACA_rnp_Nop10"/>
</dbReference>
<dbReference type="InterPro" id="IPR036756">
    <property type="entry name" value="H/ACA_rnp_Nop10_sf"/>
</dbReference>
<dbReference type="InterPro" id="IPR023532">
    <property type="entry name" value="Nop10_arc-typ"/>
</dbReference>
<dbReference type="NCBIfam" id="NF009623">
    <property type="entry name" value="PRK13130.1"/>
    <property type="match status" value="1"/>
</dbReference>
<dbReference type="PANTHER" id="PTHR13305:SF0">
    <property type="entry name" value="H_ACA RIBONUCLEOPROTEIN COMPLEX SUBUNIT 3"/>
    <property type="match status" value="1"/>
</dbReference>
<dbReference type="PANTHER" id="PTHR13305">
    <property type="entry name" value="RIBOSOME BIOGENESIS PROTEIN NOP10"/>
    <property type="match status" value="1"/>
</dbReference>
<dbReference type="Pfam" id="PF04135">
    <property type="entry name" value="Nop10p"/>
    <property type="match status" value="1"/>
</dbReference>
<dbReference type="SUPFAM" id="SSF144210">
    <property type="entry name" value="Nop10-like SnoRNP"/>
    <property type="match status" value="1"/>
</dbReference>
<name>NOP10_METST</name>
<evidence type="ECO:0000255" key="1">
    <source>
        <dbReference type="HAMAP-Rule" id="MF_00803"/>
    </source>
</evidence>
<proteinExistence type="inferred from homology"/>
<feature type="chain" id="PRO_1000083705" description="Ribosome biogenesis protein Nop10">
    <location>
        <begin position="1"/>
        <end position="55"/>
    </location>
</feature>
<reference key="1">
    <citation type="journal article" date="2006" name="J. Bacteriol.">
        <title>The genome sequence of Methanosphaera stadtmanae reveals why this human intestinal archaeon is restricted to methanol and H2 for methane formation and ATP synthesis.</title>
        <authorList>
            <person name="Fricke W.F."/>
            <person name="Seedorf H."/>
            <person name="Henne A."/>
            <person name="Kruer M."/>
            <person name="Liesegang H."/>
            <person name="Hedderich R."/>
            <person name="Gottschalk G."/>
            <person name="Thauer R.K."/>
        </authorList>
    </citation>
    <scope>NUCLEOTIDE SEQUENCE [LARGE SCALE GENOMIC DNA]</scope>
    <source>
        <strain>ATCC 43021 / DSM 3091 / JCM 11832 / MCB-3</strain>
    </source>
</reference>
<accession>Q2NE61</accession>